<gene>
    <name evidence="1" type="primary">murI</name>
    <name type="ordered locus">CLH_0058</name>
</gene>
<name>MURI_CLOBA</name>
<reference key="1">
    <citation type="submission" date="2008-05" db="EMBL/GenBank/DDBJ databases">
        <title>Complete genome sequence of Clostridium botulinum E3 str. Alaska E43.</title>
        <authorList>
            <person name="Brinkac L.M."/>
            <person name="Brown J.L."/>
            <person name="Bruce D."/>
            <person name="Detter C."/>
            <person name="Munk C."/>
            <person name="Smith L.A."/>
            <person name="Smith T.J."/>
            <person name="Sutton G."/>
            <person name="Brettin T.S."/>
        </authorList>
    </citation>
    <scope>NUCLEOTIDE SEQUENCE [LARGE SCALE GENOMIC DNA]</scope>
    <source>
        <strain>Alaska E43 / Type E3</strain>
    </source>
</reference>
<accession>B2UX89</accession>
<proteinExistence type="inferred from homology"/>
<sequence length="258" mass="28969">MDKKNRPIGFFDSGVGGLSVMKEAIRLMPNENYIYFGDSKNAPYGIKTVEEVRTLTFNAVESLLEKNVKAIVVACNTATSAAIDLVRSKYKNIPIIGIEPALKLATKYNRKGNIIIMATPMTLKEKKFKSLMEKYGENYDIVSLPCAKLVEFIEHGILSGEELEEYLKEKFKSYKNNDIGVVVLGCTHYPFIKETLYKVIDKDIPIIDGGLGTSQELRRRLEEKNLLNTEDKKGSITIINSNGSEKMIELSKKLIESS</sequence>
<protein>
    <recommendedName>
        <fullName evidence="1">Glutamate racemase</fullName>
        <ecNumber evidence="1">5.1.1.3</ecNumber>
    </recommendedName>
</protein>
<evidence type="ECO:0000255" key="1">
    <source>
        <dbReference type="HAMAP-Rule" id="MF_00258"/>
    </source>
</evidence>
<feature type="chain" id="PRO_1000114036" description="Glutamate racemase">
    <location>
        <begin position="1"/>
        <end position="258"/>
    </location>
</feature>
<feature type="active site" description="Proton donor/acceptor" evidence="1">
    <location>
        <position position="75"/>
    </location>
</feature>
<feature type="active site" description="Proton donor/acceptor" evidence="1">
    <location>
        <position position="186"/>
    </location>
</feature>
<feature type="binding site" evidence="1">
    <location>
        <begin position="12"/>
        <end position="13"/>
    </location>
    <ligand>
        <name>substrate</name>
    </ligand>
</feature>
<feature type="binding site" evidence="1">
    <location>
        <begin position="44"/>
        <end position="45"/>
    </location>
    <ligand>
        <name>substrate</name>
    </ligand>
</feature>
<feature type="binding site" evidence="1">
    <location>
        <begin position="76"/>
        <end position="77"/>
    </location>
    <ligand>
        <name>substrate</name>
    </ligand>
</feature>
<feature type="binding site" evidence="1">
    <location>
        <begin position="187"/>
        <end position="188"/>
    </location>
    <ligand>
        <name>substrate</name>
    </ligand>
</feature>
<dbReference type="EC" id="5.1.1.3" evidence="1"/>
<dbReference type="EMBL" id="CP001078">
    <property type="protein sequence ID" value="ACD50964.1"/>
    <property type="molecule type" value="Genomic_DNA"/>
</dbReference>
<dbReference type="RefSeq" id="WP_012449428.1">
    <property type="nucleotide sequence ID" value="NC_010723.1"/>
</dbReference>
<dbReference type="SMR" id="B2UX89"/>
<dbReference type="KEGG" id="cbt:CLH_0058"/>
<dbReference type="HOGENOM" id="CLU_052344_1_0_9"/>
<dbReference type="UniPathway" id="UPA00219"/>
<dbReference type="GO" id="GO:0008881">
    <property type="term" value="F:glutamate racemase activity"/>
    <property type="evidence" value="ECO:0007669"/>
    <property type="project" value="UniProtKB-UniRule"/>
</dbReference>
<dbReference type="GO" id="GO:0071555">
    <property type="term" value="P:cell wall organization"/>
    <property type="evidence" value="ECO:0007669"/>
    <property type="project" value="UniProtKB-KW"/>
</dbReference>
<dbReference type="GO" id="GO:0009252">
    <property type="term" value="P:peptidoglycan biosynthetic process"/>
    <property type="evidence" value="ECO:0007669"/>
    <property type="project" value="UniProtKB-UniRule"/>
</dbReference>
<dbReference type="GO" id="GO:0008360">
    <property type="term" value="P:regulation of cell shape"/>
    <property type="evidence" value="ECO:0007669"/>
    <property type="project" value="UniProtKB-KW"/>
</dbReference>
<dbReference type="FunFam" id="3.40.50.1860:FF:000002">
    <property type="entry name" value="Glutamate racemase"/>
    <property type="match status" value="1"/>
</dbReference>
<dbReference type="Gene3D" id="3.40.50.1860">
    <property type="match status" value="2"/>
</dbReference>
<dbReference type="HAMAP" id="MF_00258">
    <property type="entry name" value="Glu_racemase"/>
    <property type="match status" value="1"/>
</dbReference>
<dbReference type="InterPro" id="IPR015942">
    <property type="entry name" value="Asp/Glu/hydantoin_racemase"/>
</dbReference>
<dbReference type="InterPro" id="IPR001920">
    <property type="entry name" value="Asp/Glu_race"/>
</dbReference>
<dbReference type="InterPro" id="IPR018187">
    <property type="entry name" value="Asp/Glu_racemase_AS_1"/>
</dbReference>
<dbReference type="InterPro" id="IPR033134">
    <property type="entry name" value="Asp/Glu_racemase_AS_2"/>
</dbReference>
<dbReference type="InterPro" id="IPR004391">
    <property type="entry name" value="Glu_race"/>
</dbReference>
<dbReference type="NCBIfam" id="TIGR00067">
    <property type="entry name" value="glut_race"/>
    <property type="match status" value="1"/>
</dbReference>
<dbReference type="PANTHER" id="PTHR21198">
    <property type="entry name" value="GLUTAMATE RACEMASE"/>
    <property type="match status" value="1"/>
</dbReference>
<dbReference type="PANTHER" id="PTHR21198:SF3">
    <property type="entry name" value="GLUTAMATE RACEMASE"/>
    <property type="match status" value="1"/>
</dbReference>
<dbReference type="Pfam" id="PF01177">
    <property type="entry name" value="Asp_Glu_race"/>
    <property type="match status" value="1"/>
</dbReference>
<dbReference type="SUPFAM" id="SSF53681">
    <property type="entry name" value="Aspartate/glutamate racemase"/>
    <property type="match status" value="2"/>
</dbReference>
<dbReference type="PROSITE" id="PS00923">
    <property type="entry name" value="ASP_GLU_RACEMASE_1"/>
    <property type="match status" value="1"/>
</dbReference>
<dbReference type="PROSITE" id="PS00924">
    <property type="entry name" value="ASP_GLU_RACEMASE_2"/>
    <property type="match status" value="1"/>
</dbReference>
<comment type="function">
    <text evidence="1">Provides the (R)-glutamate required for cell wall biosynthesis.</text>
</comment>
<comment type="catalytic activity">
    <reaction evidence="1">
        <text>L-glutamate = D-glutamate</text>
        <dbReference type="Rhea" id="RHEA:12813"/>
        <dbReference type="ChEBI" id="CHEBI:29985"/>
        <dbReference type="ChEBI" id="CHEBI:29986"/>
        <dbReference type="EC" id="5.1.1.3"/>
    </reaction>
</comment>
<comment type="pathway">
    <text evidence="1">Cell wall biogenesis; peptidoglycan biosynthesis.</text>
</comment>
<comment type="similarity">
    <text evidence="1">Belongs to the aspartate/glutamate racemases family.</text>
</comment>
<keyword id="KW-0133">Cell shape</keyword>
<keyword id="KW-0961">Cell wall biogenesis/degradation</keyword>
<keyword id="KW-0413">Isomerase</keyword>
<keyword id="KW-0573">Peptidoglycan synthesis</keyword>
<organism>
    <name type="scientific">Clostridium botulinum (strain Alaska E43 / Type E3)</name>
    <dbReference type="NCBI Taxonomy" id="508767"/>
    <lineage>
        <taxon>Bacteria</taxon>
        <taxon>Bacillati</taxon>
        <taxon>Bacillota</taxon>
        <taxon>Clostridia</taxon>
        <taxon>Eubacteriales</taxon>
        <taxon>Clostridiaceae</taxon>
        <taxon>Clostridium</taxon>
    </lineage>
</organism>